<feature type="chain" id="PRO_0000375609" description="Succinyl-diaminopimelate desuccinylase">
    <location>
        <begin position="1"/>
        <end position="395"/>
    </location>
</feature>
<feature type="active site" evidence="1">
    <location>
        <position position="76"/>
    </location>
</feature>
<feature type="active site" description="Proton acceptor" evidence="1">
    <location>
        <position position="141"/>
    </location>
</feature>
<feature type="binding site" evidence="1">
    <location>
        <position position="74"/>
    </location>
    <ligand>
        <name>Zn(2+)</name>
        <dbReference type="ChEBI" id="CHEBI:29105"/>
        <label>1</label>
    </ligand>
</feature>
<feature type="binding site" evidence="1">
    <location>
        <position position="107"/>
    </location>
    <ligand>
        <name>Zn(2+)</name>
        <dbReference type="ChEBI" id="CHEBI:29105"/>
        <label>1</label>
    </ligand>
</feature>
<feature type="binding site" evidence="1">
    <location>
        <position position="107"/>
    </location>
    <ligand>
        <name>Zn(2+)</name>
        <dbReference type="ChEBI" id="CHEBI:29105"/>
        <label>2</label>
    </ligand>
</feature>
<feature type="binding site" evidence="1">
    <location>
        <position position="142"/>
    </location>
    <ligand>
        <name>Zn(2+)</name>
        <dbReference type="ChEBI" id="CHEBI:29105"/>
        <label>2</label>
    </ligand>
</feature>
<feature type="binding site" evidence="1">
    <location>
        <position position="170"/>
    </location>
    <ligand>
        <name>Zn(2+)</name>
        <dbReference type="ChEBI" id="CHEBI:29105"/>
        <label>1</label>
    </ligand>
</feature>
<feature type="binding site" evidence="1">
    <location>
        <position position="368"/>
    </location>
    <ligand>
        <name>Zn(2+)</name>
        <dbReference type="ChEBI" id="CHEBI:29105"/>
        <label>2</label>
    </ligand>
</feature>
<proteinExistence type="inferred from homology"/>
<sequence length="395" mass="42767">MTLPTDPAQNLASLIRCRSVTPVEGGALTALEAMLRPLGARVDRPVFSEEGEADVENLYARIGKDGPHLMFAGHTDVVPPGDEDAWTHPPFAAEIAGGEMFGRGAVDMKGGIACFVAALARHLEVSGTPKGSVSFLITGDEEGPSVNGSVKLLEWAAARGERWDAALVGEPTNVETLGDMVKIGRRGSLSGRITLFGRQGHVAYPHLADNPSRGLVALLEALMEPAFDQGTADFPPTNLEITTIDVGNPSVNVIPARATAAFNVRFNDTWSVETLQAEIHNRLDRAAAENRLRPGRTEPVSFELEWRDRPSPVFLTRDDKLVATLAASIEAVTGRKPQLSTTGGTSDARFIKDYCPVIEFGLVGQTMHMVDEKVPLSDLETLTRIYQRFLENWFS</sequence>
<name>DAPE_CHESB</name>
<dbReference type="EC" id="3.5.1.18" evidence="1"/>
<dbReference type="EMBL" id="CP000390">
    <property type="protein sequence ID" value="ABG61793.1"/>
    <property type="molecule type" value="Genomic_DNA"/>
</dbReference>
<dbReference type="SMR" id="Q11LD2"/>
<dbReference type="STRING" id="266779.Meso_0389"/>
<dbReference type="KEGG" id="mes:Meso_0389"/>
<dbReference type="eggNOG" id="COG0624">
    <property type="taxonomic scope" value="Bacteria"/>
</dbReference>
<dbReference type="HOGENOM" id="CLU_021802_4_0_5"/>
<dbReference type="OrthoDB" id="9809784at2"/>
<dbReference type="UniPathway" id="UPA00034">
    <property type="reaction ID" value="UER00021"/>
</dbReference>
<dbReference type="GO" id="GO:0008777">
    <property type="term" value="F:acetylornithine deacetylase activity"/>
    <property type="evidence" value="ECO:0007669"/>
    <property type="project" value="TreeGrafter"/>
</dbReference>
<dbReference type="GO" id="GO:0050897">
    <property type="term" value="F:cobalt ion binding"/>
    <property type="evidence" value="ECO:0007669"/>
    <property type="project" value="UniProtKB-UniRule"/>
</dbReference>
<dbReference type="GO" id="GO:0009014">
    <property type="term" value="F:succinyl-diaminopimelate desuccinylase activity"/>
    <property type="evidence" value="ECO:0007669"/>
    <property type="project" value="UniProtKB-UniRule"/>
</dbReference>
<dbReference type="GO" id="GO:0008270">
    <property type="term" value="F:zinc ion binding"/>
    <property type="evidence" value="ECO:0007669"/>
    <property type="project" value="UniProtKB-UniRule"/>
</dbReference>
<dbReference type="GO" id="GO:0019877">
    <property type="term" value="P:diaminopimelate biosynthetic process"/>
    <property type="evidence" value="ECO:0007669"/>
    <property type="project" value="UniProtKB-UniRule"/>
</dbReference>
<dbReference type="GO" id="GO:0006526">
    <property type="term" value="P:L-arginine biosynthetic process"/>
    <property type="evidence" value="ECO:0007669"/>
    <property type="project" value="TreeGrafter"/>
</dbReference>
<dbReference type="GO" id="GO:0009089">
    <property type="term" value="P:lysine biosynthetic process via diaminopimelate"/>
    <property type="evidence" value="ECO:0007669"/>
    <property type="project" value="UniProtKB-UniRule"/>
</dbReference>
<dbReference type="CDD" id="cd03891">
    <property type="entry name" value="M20_DapE_proteobac"/>
    <property type="match status" value="1"/>
</dbReference>
<dbReference type="Gene3D" id="3.30.70.360">
    <property type="match status" value="1"/>
</dbReference>
<dbReference type="Gene3D" id="3.40.630.10">
    <property type="entry name" value="Zn peptidases"/>
    <property type="match status" value="2"/>
</dbReference>
<dbReference type="HAMAP" id="MF_01690">
    <property type="entry name" value="DapE"/>
    <property type="match status" value="1"/>
</dbReference>
<dbReference type="InterPro" id="IPR001261">
    <property type="entry name" value="ArgE/DapE_CS"/>
</dbReference>
<dbReference type="InterPro" id="IPR036264">
    <property type="entry name" value="Bact_exopeptidase_dim_dom"/>
</dbReference>
<dbReference type="InterPro" id="IPR005941">
    <property type="entry name" value="DapE_proteobac"/>
</dbReference>
<dbReference type="InterPro" id="IPR002933">
    <property type="entry name" value="Peptidase_M20"/>
</dbReference>
<dbReference type="InterPro" id="IPR011650">
    <property type="entry name" value="Peptidase_M20_dimer"/>
</dbReference>
<dbReference type="InterPro" id="IPR050072">
    <property type="entry name" value="Peptidase_M20A"/>
</dbReference>
<dbReference type="NCBIfam" id="TIGR01246">
    <property type="entry name" value="dapE_proteo"/>
    <property type="match status" value="1"/>
</dbReference>
<dbReference type="NCBIfam" id="NF009557">
    <property type="entry name" value="PRK13009.1"/>
    <property type="match status" value="1"/>
</dbReference>
<dbReference type="PANTHER" id="PTHR43808">
    <property type="entry name" value="ACETYLORNITHINE DEACETYLASE"/>
    <property type="match status" value="1"/>
</dbReference>
<dbReference type="PANTHER" id="PTHR43808:SF31">
    <property type="entry name" value="N-ACETYL-L-CITRULLINE DEACETYLASE"/>
    <property type="match status" value="1"/>
</dbReference>
<dbReference type="Pfam" id="PF07687">
    <property type="entry name" value="M20_dimer"/>
    <property type="match status" value="1"/>
</dbReference>
<dbReference type="Pfam" id="PF01546">
    <property type="entry name" value="Peptidase_M20"/>
    <property type="match status" value="1"/>
</dbReference>
<dbReference type="SUPFAM" id="SSF55031">
    <property type="entry name" value="Bacterial exopeptidase dimerisation domain"/>
    <property type="match status" value="1"/>
</dbReference>
<dbReference type="SUPFAM" id="SSF53187">
    <property type="entry name" value="Zn-dependent exopeptidases"/>
    <property type="match status" value="1"/>
</dbReference>
<dbReference type="PROSITE" id="PS00758">
    <property type="entry name" value="ARGE_DAPE_CPG2_1"/>
    <property type="match status" value="1"/>
</dbReference>
<dbReference type="PROSITE" id="PS00759">
    <property type="entry name" value="ARGE_DAPE_CPG2_2"/>
    <property type="match status" value="1"/>
</dbReference>
<keyword id="KW-0028">Amino-acid biosynthesis</keyword>
<keyword id="KW-0170">Cobalt</keyword>
<keyword id="KW-0220">Diaminopimelate biosynthesis</keyword>
<keyword id="KW-0378">Hydrolase</keyword>
<keyword id="KW-0457">Lysine biosynthesis</keyword>
<keyword id="KW-0479">Metal-binding</keyword>
<keyword id="KW-0862">Zinc</keyword>
<evidence type="ECO:0000255" key="1">
    <source>
        <dbReference type="HAMAP-Rule" id="MF_01690"/>
    </source>
</evidence>
<reference key="1">
    <citation type="submission" date="2006-06" db="EMBL/GenBank/DDBJ databases">
        <title>Complete sequence of chromosome of Mesorhizobium sp. BNC1.</title>
        <authorList>
            <consortium name="US DOE Joint Genome Institute"/>
            <person name="Copeland A."/>
            <person name="Lucas S."/>
            <person name="Lapidus A."/>
            <person name="Barry K."/>
            <person name="Detter J.C."/>
            <person name="Glavina del Rio T."/>
            <person name="Hammon N."/>
            <person name="Israni S."/>
            <person name="Dalin E."/>
            <person name="Tice H."/>
            <person name="Pitluck S."/>
            <person name="Chertkov O."/>
            <person name="Brettin T."/>
            <person name="Bruce D."/>
            <person name="Han C."/>
            <person name="Tapia R."/>
            <person name="Gilna P."/>
            <person name="Schmutz J."/>
            <person name="Larimer F."/>
            <person name="Land M."/>
            <person name="Hauser L."/>
            <person name="Kyrpides N."/>
            <person name="Mikhailova N."/>
            <person name="Richardson P."/>
        </authorList>
    </citation>
    <scope>NUCLEOTIDE SEQUENCE [LARGE SCALE GENOMIC DNA]</scope>
    <source>
        <strain>BNC1</strain>
    </source>
</reference>
<accession>Q11LD2</accession>
<organism>
    <name type="scientific">Chelativorans sp. (strain BNC1)</name>
    <dbReference type="NCBI Taxonomy" id="266779"/>
    <lineage>
        <taxon>Bacteria</taxon>
        <taxon>Pseudomonadati</taxon>
        <taxon>Pseudomonadota</taxon>
        <taxon>Alphaproteobacteria</taxon>
        <taxon>Hyphomicrobiales</taxon>
        <taxon>Phyllobacteriaceae</taxon>
        <taxon>Chelativorans</taxon>
    </lineage>
</organism>
<gene>
    <name evidence="1" type="primary">dapE</name>
    <name type="ordered locus">Meso_0389</name>
</gene>
<protein>
    <recommendedName>
        <fullName evidence="1">Succinyl-diaminopimelate desuccinylase</fullName>
        <shortName evidence="1">SDAP desuccinylase</shortName>
        <ecNumber evidence="1">3.5.1.18</ecNumber>
    </recommendedName>
    <alternativeName>
        <fullName evidence="1">N-succinyl-LL-2,6-diaminoheptanedioate amidohydrolase</fullName>
    </alternativeName>
</protein>
<comment type="function">
    <text evidence="1">Catalyzes the hydrolysis of N-succinyl-L,L-diaminopimelic acid (SDAP), forming succinate and LL-2,6-diaminopimelate (DAP), an intermediate involved in the bacterial biosynthesis of lysine and meso-diaminopimelic acid, an essential component of bacterial cell walls.</text>
</comment>
<comment type="catalytic activity">
    <reaction evidence="1">
        <text>N-succinyl-(2S,6S)-2,6-diaminopimelate + H2O = (2S,6S)-2,6-diaminopimelate + succinate</text>
        <dbReference type="Rhea" id="RHEA:22608"/>
        <dbReference type="ChEBI" id="CHEBI:15377"/>
        <dbReference type="ChEBI" id="CHEBI:30031"/>
        <dbReference type="ChEBI" id="CHEBI:57609"/>
        <dbReference type="ChEBI" id="CHEBI:58087"/>
        <dbReference type="EC" id="3.5.1.18"/>
    </reaction>
</comment>
<comment type="cofactor">
    <cofactor evidence="1">
        <name>Zn(2+)</name>
        <dbReference type="ChEBI" id="CHEBI:29105"/>
    </cofactor>
    <cofactor evidence="1">
        <name>Co(2+)</name>
        <dbReference type="ChEBI" id="CHEBI:48828"/>
    </cofactor>
    <text evidence="1">Binds 2 Zn(2+) or Co(2+) ions per subunit.</text>
</comment>
<comment type="pathway">
    <text evidence="1">Amino-acid biosynthesis; L-lysine biosynthesis via DAP pathway; LL-2,6-diaminopimelate from (S)-tetrahydrodipicolinate (succinylase route): step 3/3.</text>
</comment>
<comment type="subunit">
    <text evidence="1">Homodimer.</text>
</comment>
<comment type="similarity">
    <text evidence="1">Belongs to the peptidase M20A family. DapE subfamily.</text>
</comment>